<dbReference type="EC" id="1.7.1.7" evidence="1 2"/>
<dbReference type="EMBL" id="FR796413">
    <property type="protein sequence ID" value="CAJ03667.1"/>
    <property type="status" value="ALT_INIT"/>
    <property type="molecule type" value="Genomic_DNA"/>
</dbReference>
<dbReference type="RefSeq" id="XP_001682335.1">
    <property type="nucleotide sequence ID" value="XM_001682283.1"/>
</dbReference>
<dbReference type="SMR" id="Q4QEB3"/>
<dbReference type="STRING" id="5664.Q4QEB3"/>
<dbReference type="EnsemblProtists" id="CAJ03667">
    <property type="protein sequence ID" value="CAJ03667"/>
    <property type="gene ID" value="LMJF_17_0725"/>
</dbReference>
<dbReference type="GeneID" id="5650809"/>
<dbReference type="KEGG" id="lma:LMJF_17_0725"/>
<dbReference type="VEuPathDB" id="TriTrypDB:LmjF.17.0725"/>
<dbReference type="VEuPathDB" id="TriTrypDB:LMJFC_170015700"/>
<dbReference type="VEuPathDB" id="TriTrypDB:LMJLV39_170014800"/>
<dbReference type="VEuPathDB" id="TriTrypDB:LMJSD75_170014400"/>
<dbReference type="eggNOG" id="KOG2550">
    <property type="taxonomic scope" value="Eukaryota"/>
</dbReference>
<dbReference type="HOGENOM" id="CLU_022552_2_1_1"/>
<dbReference type="InParanoid" id="Q4QEB3"/>
<dbReference type="BRENDA" id="1.7.1.7">
    <property type="organism ID" value="2950"/>
</dbReference>
<dbReference type="Proteomes" id="UP000000542">
    <property type="component" value="Chromosome 17"/>
</dbReference>
<dbReference type="GO" id="GO:0005737">
    <property type="term" value="C:cytoplasm"/>
    <property type="evidence" value="ECO:0000318"/>
    <property type="project" value="GO_Central"/>
</dbReference>
<dbReference type="GO" id="GO:0020015">
    <property type="term" value="C:glycosome"/>
    <property type="evidence" value="ECO:0000266"/>
    <property type="project" value="GeneDB"/>
</dbReference>
<dbReference type="GO" id="GO:1902560">
    <property type="term" value="C:GMP reductase complex"/>
    <property type="evidence" value="ECO:0007669"/>
    <property type="project" value="InterPro"/>
</dbReference>
<dbReference type="GO" id="GO:0005730">
    <property type="term" value="C:nucleolus"/>
    <property type="evidence" value="ECO:0000266"/>
    <property type="project" value="GeneDB"/>
</dbReference>
<dbReference type="GO" id="GO:0003920">
    <property type="term" value="F:GMP reductase activity"/>
    <property type="evidence" value="ECO:0000266"/>
    <property type="project" value="GeneDB"/>
</dbReference>
<dbReference type="GO" id="GO:0003938">
    <property type="term" value="F:IMP dehydrogenase activity"/>
    <property type="evidence" value="ECO:0000318"/>
    <property type="project" value="GO_Central"/>
</dbReference>
<dbReference type="GO" id="GO:0046872">
    <property type="term" value="F:metal ion binding"/>
    <property type="evidence" value="ECO:0007669"/>
    <property type="project" value="UniProtKB-KW"/>
</dbReference>
<dbReference type="GO" id="GO:0006183">
    <property type="term" value="P:GTP biosynthetic process"/>
    <property type="evidence" value="ECO:0000318"/>
    <property type="project" value="GO_Central"/>
</dbReference>
<dbReference type="GO" id="GO:0006144">
    <property type="term" value="P:purine nucleobase metabolic process"/>
    <property type="evidence" value="ECO:0007669"/>
    <property type="project" value="UniProtKB-KW"/>
</dbReference>
<dbReference type="CDD" id="cd04601">
    <property type="entry name" value="CBS_pair_IMPDH"/>
    <property type="match status" value="1"/>
</dbReference>
<dbReference type="CDD" id="cd00381">
    <property type="entry name" value="IMPDH"/>
    <property type="match status" value="1"/>
</dbReference>
<dbReference type="FunFam" id="3.20.20.70:FF:000003">
    <property type="entry name" value="GMP reductase"/>
    <property type="match status" value="1"/>
</dbReference>
<dbReference type="Gene3D" id="3.20.20.70">
    <property type="entry name" value="Aldolase class I"/>
    <property type="match status" value="1"/>
</dbReference>
<dbReference type="HAMAP" id="MF_00596">
    <property type="entry name" value="GMP_reduct_type1"/>
    <property type="match status" value="1"/>
</dbReference>
<dbReference type="InterPro" id="IPR013785">
    <property type="entry name" value="Aldolase_TIM"/>
</dbReference>
<dbReference type="InterPro" id="IPR000644">
    <property type="entry name" value="CBS_dom"/>
</dbReference>
<dbReference type="InterPro" id="IPR046342">
    <property type="entry name" value="CBS_dom_sf"/>
</dbReference>
<dbReference type="InterPro" id="IPR005993">
    <property type="entry name" value="GMPR"/>
</dbReference>
<dbReference type="InterPro" id="IPR005990">
    <property type="entry name" value="IMP_DH"/>
</dbReference>
<dbReference type="InterPro" id="IPR015875">
    <property type="entry name" value="IMP_DH/GMP_Rdtase_CS"/>
</dbReference>
<dbReference type="InterPro" id="IPR001093">
    <property type="entry name" value="IMP_DH_GMPRt"/>
</dbReference>
<dbReference type="NCBIfam" id="TIGR01302">
    <property type="entry name" value="IMP_dehydrog"/>
    <property type="match status" value="1"/>
</dbReference>
<dbReference type="PANTHER" id="PTHR11911:SF122">
    <property type="entry name" value="GMP REDUCTASE"/>
    <property type="match status" value="1"/>
</dbReference>
<dbReference type="PANTHER" id="PTHR11911">
    <property type="entry name" value="INOSINE-5-MONOPHOSPHATE DEHYDROGENASE RELATED"/>
    <property type="match status" value="1"/>
</dbReference>
<dbReference type="Pfam" id="PF00571">
    <property type="entry name" value="CBS"/>
    <property type="match status" value="2"/>
</dbReference>
<dbReference type="Pfam" id="PF00478">
    <property type="entry name" value="IMPDH"/>
    <property type="match status" value="1"/>
</dbReference>
<dbReference type="PIRSF" id="PIRSF000130">
    <property type="entry name" value="IMPDH"/>
    <property type="match status" value="1"/>
</dbReference>
<dbReference type="SMART" id="SM00116">
    <property type="entry name" value="CBS"/>
    <property type="match status" value="2"/>
</dbReference>
<dbReference type="SMART" id="SM01240">
    <property type="entry name" value="IMPDH"/>
    <property type="match status" value="1"/>
</dbReference>
<dbReference type="SUPFAM" id="SSF54631">
    <property type="entry name" value="CBS-domain pair"/>
    <property type="match status" value="1"/>
</dbReference>
<dbReference type="SUPFAM" id="SSF51412">
    <property type="entry name" value="Inosine monophosphate dehydrogenase (IMPDH)"/>
    <property type="match status" value="1"/>
</dbReference>
<dbReference type="PROSITE" id="PS51371">
    <property type="entry name" value="CBS"/>
    <property type="match status" value="2"/>
</dbReference>
<dbReference type="PROSITE" id="PS00487">
    <property type="entry name" value="IMP_DH_GMP_RED"/>
    <property type="match status" value="1"/>
</dbReference>
<accession>Q4QEB3</accession>
<keyword id="KW-0129">CBS domain</keyword>
<keyword id="KW-0327">Glycosome</keyword>
<keyword id="KW-0479">Metal-binding</keyword>
<keyword id="KW-0521">NADP</keyword>
<keyword id="KW-0560">Oxidoreductase</keyword>
<keyword id="KW-0576">Peroxisome</keyword>
<keyword id="KW-0630">Potassium</keyword>
<keyword id="KW-0659">Purine metabolism</keyword>
<keyword id="KW-1185">Reference proteome</keyword>
<keyword id="KW-0677">Repeat</keyword>
<evidence type="ECO:0000255" key="1">
    <source>
        <dbReference type="HAMAP-Rule" id="MF_03195"/>
    </source>
</evidence>
<evidence type="ECO:0000269" key="2">
    <source ref="2"/>
</evidence>
<evidence type="ECO:0000303" key="3">
    <source ref="2"/>
</evidence>
<evidence type="ECO:0000305" key="4">
    <source ref="2"/>
</evidence>
<comment type="function">
    <text evidence="1 2">Catalyzes the irreversible NADPH-dependent deamination of GMP to IMP. It functions in the conversion of nucleobase, nucleoside and nucleotide derivatives of G to A nucleotides, and in maintaining the intracellular balance of A and G nucleotides.</text>
</comment>
<comment type="catalytic activity">
    <reaction evidence="1 2">
        <text>IMP + NH4(+) + NADP(+) = GMP + NADPH + 2 H(+)</text>
        <dbReference type="Rhea" id="RHEA:17185"/>
        <dbReference type="ChEBI" id="CHEBI:15378"/>
        <dbReference type="ChEBI" id="CHEBI:28938"/>
        <dbReference type="ChEBI" id="CHEBI:57783"/>
        <dbReference type="ChEBI" id="CHEBI:58053"/>
        <dbReference type="ChEBI" id="CHEBI:58115"/>
        <dbReference type="ChEBI" id="CHEBI:58349"/>
        <dbReference type="EC" id="1.7.1.7"/>
    </reaction>
</comment>
<comment type="activity regulation">
    <text evidence="2">Activated by GTP and inhibited by ATP and IMP. Mycophenolic acid (MPA) is a competitive inhibitor of the enzyme with respect to NADPH.</text>
</comment>
<comment type="biophysicochemical properties">
    <kinetics>
        <KM evidence="2">37 uM for GMP</KM>
        <KM evidence="2">12 uM for NADPH</KM>
        <text evidence="2">kcat is 0.059 min(-1) with GMP as substrate and 0.043 min(-1) with NADPH as substrate.</text>
    </kinetics>
</comment>
<comment type="subunit">
    <text evidence="1">Homotetramer.</text>
</comment>
<comment type="subcellular location">
    <subcellularLocation>
        <location evidence="1">Glycosome</location>
    </subcellularLocation>
</comment>
<comment type="similarity">
    <text evidence="1">Belongs to the IMPDH/GMPR family. GuaC type 1 subfamily.</text>
</comment>
<comment type="sequence caution" evidence="4">
    <conflict type="erroneous initiation">
        <sequence resource="EMBL-CDS" id="CAJ03667"/>
    </conflict>
    <text>Extended N-terminus.</text>
</comment>
<feature type="chain" id="PRO_0000433991" description="GMP reductase">
    <location>
        <begin position="1"/>
        <end position="492"/>
    </location>
</feature>
<feature type="domain" description="CBS 1" evidence="1">
    <location>
        <begin position="99"/>
        <end position="162"/>
    </location>
</feature>
<feature type="domain" description="CBS 2" evidence="1">
    <location>
        <begin position="164"/>
        <end position="223"/>
    </location>
</feature>
<feature type="short sequence motif" description="Microbody targeting signal" evidence="1">
    <location>
        <begin position="490"/>
        <end position="492"/>
    </location>
</feature>
<feature type="active site" description="Thioimidate intermediate" evidence="1">
    <location>
        <position position="319"/>
    </location>
</feature>
<feature type="active site" description="Proton donor/acceptor" evidence="1">
    <location>
        <position position="321"/>
    </location>
</feature>
<feature type="binding site" evidence="1">
    <location>
        <begin position="30"/>
        <end position="31"/>
    </location>
    <ligand>
        <name>NADP(+)</name>
        <dbReference type="ChEBI" id="CHEBI:58349"/>
        <note>ligand shared between two neighboring subunits</note>
    </ligand>
</feature>
<feature type="binding site" description="in other chain" evidence="1">
    <location>
        <position position="78"/>
    </location>
    <ligand>
        <name>NADP(+)</name>
        <dbReference type="ChEBI" id="CHEBI:58349"/>
        <note>ligand shared between two neighboring subunits</note>
    </ligand>
</feature>
<feature type="binding site" description="in other chain" evidence="1">
    <location>
        <begin position="260"/>
        <end position="262"/>
    </location>
    <ligand>
        <name>NADP(+)</name>
        <dbReference type="ChEBI" id="CHEBI:58349"/>
        <note>ligand shared between two neighboring subunits</note>
    </ligand>
</feature>
<feature type="binding site" description="in other chain" evidence="1">
    <location>
        <begin position="313"/>
        <end position="314"/>
    </location>
    <ligand>
        <name>NADP(+)</name>
        <dbReference type="ChEBI" id="CHEBI:58349"/>
        <note>ligand shared between two neighboring subunits</note>
    </ligand>
</feature>
<feature type="binding site" evidence="1">
    <location>
        <position position="314"/>
    </location>
    <ligand>
        <name>K(+)</name>
        <dbReference type="ChEBI" id="CHEBI:29103"/>
    </ligand>
</feature>
<feature type="binding site" evidence="1">
    <location>
        <position position="316"/>
    </location>
    <ligand>
        <name>K(+)</name>
        <dbReference type="ChEBI" id="CHEBI:29103"/>
    </ligand>
</feature>
<feature type="binding site" evidence="1">
    <location>
        <position position="319"/>
    </location>
    <ligand>
        <name>K(+)</name>
        <dbReference type="ChEBI" id="CHEBI:29103"/>
    </ligand>
</feature>
<feature type="binding site" evidence="1">
    <location>
        <position position="322"/>
    </location>
    <ligand>
        <name>K(+)</name>
        <dbReference type="ChEBI" id="CHEBI:29103"/>
    </ligand>
</feature>
<feature type="binding site" evidence="1">
    <location>
        <begin position="352"/>
        <end position="354"/>
    </location>
    <ligand>
        <name>GMP</name>
        <dbReference type="ChEBI" id="CHEBI:58115"/>
    </ligand>
</feature>
<feature type="binding site" evidence="1">
    <location>
        <begin position="375"/>
        <end position="376"/>
    </location>
    <ligand>
        <name>GMP</name>
        <dbReference type="ChEBI" id="CHEBI:58115"/>
    </ligand>
</feature>
<feature type="binding site" evidence="1">
    <location>
        <begin position="401"/>
        <end position="403"/>
    </location>
    <ligand>
        <name>GMP</name>
        <dbReference type="ChEBI" id="CHEBI:58115"/>
    </ligand>
</feature>
<feature type="binding site" description="in other chain" evidence="1">
    <location>
        <position position="402"/>
    </location>
    <ligand>
        <name>NADP(+)</name>
        <dbReference type="ChEBI" id="CHEBI:58349"/>
        <note>ligand shared between two neighboring subunits</note>
    </ligand>
</feature>
<feature type="binding site" evidence="1">
    <location>
        <begin position="454"/>
        <end position="457"/>
    </location>
    <ligand>
        <name>NADP(+)</name>
        <dbReference type="ChEBI" id="CHEBI:58349"/>
        <note>ligand shared between two neighboring subunits</note>
    </ligand>
</feature>
<proteinExistence type="evidence at protein level"/>
<reference key="1">
    <citation type="journal article" date="2005" name="Science">
        <title>The genome of the kinetoplastid parasite, Leishmania major.</title>
        <authorList>
            <person name="Ivens A.C."/>
            <person name="Peacock C.S."/>
            <person name="Worthey E.A."/>
            <person name="Murphy L."/>
            <person name="Aggarwal G."/>
            <person name="Berriman M."/>
            <person name="Sisk E."/>
            <person name="Rajandream M.A."/>
            <person name="Adlem E."/>
            <person name="Aert R."/>
            <person name="Anupama A."/>
            <person name="Apostolou Z."/>
            <person name="Attipoe P."/>
            <person name="Bason N."/>
            <person name="Bauser C."/>
            <person name="Beck A."/>
            <person name="Beverley S.M."/>
            <person name="Bianchettin G."/>
            <person name="Borzym K."/>
            <person name="Bothe G."/>
            <person name="Bruschi C.V."/>
            <person name="Collins M."/>
            <person name="Cadag E."/>
            <person name="Ciarloni L."/>
            <person name="Clayton C."/>
            <person name="Coulson R.M.R."/>
            <person name="Cronin A."/>
            <person name="Cruz A.K."/>
            <person name="Davies R.M."/>
            <person name="De Gaudenzi J."/>
            <person name="Dobson D.E."/>
            <person name="Duesterhoeft A."/>
            <person name="Fazelina G."/>
            <person name="Fosker N."/>
            <person name="Frasch A.C."/>
            <person name="Fraser A."/>
            <person name="Fuchs M."/>
            <person name="Gabel C."/>
            <person name="Goble A."/>
            <person name="Goffeau A."/>
            <person name="Harris D."/>
            <person name="Hertz-Fowler C."/>
            <person name="Hilbert H."/>
            <person name="Horn D."/>
            <person name="Huang Y."/>
            <person name="Klages S."/>
            <person name="Knights A."/>
            <person name="Kube M."/>
            <person name="Larke N."/>
            <person name="Litvin L."/>
            <person name="Lord A."/>
            <person name="Louie T."/>
            <person name="Marra M."/>
            <person name="Masuy D."/>
            <person name="Matthews K."/>
            <person name="Michaeli S."/>
            <person name="Mottram J.C."/>
            <person name="Mueller-Auer S."/>
            <person name="Munden H."/>
            <person name="Nelson S."/>
            <person name="Norbertczak H."/>
            <person name="Oliver K."/>
            <person name="O'neil S."/>
            <person name="Pentony M."/>
            <person name="Pohl T.M."/>
            <person name="Price C."/>
            <person name="Purnelle B."/>
            <person name="Quail M.A."/>
            <person name="Rabbinowitsch E."/>
            <person name="Reinhardt R."/>
            <person name="Rieger M."/>
            <person name="Rinta J."/>
            <person name="Robben J."/>
            <person name="Robertson L."/>
            <person name="Ruiz J.C."/>
            <person name="Rutter S."/>
            <person name="Saunders D."/>
            <person name="Schaefer M."/>
            <person name="Schein J."/>
            <person name="Schwartz D.C."/>
            <person name="Seeger K."/>
            <person name="Seyler A."/>
            <person name="Sharp S."/>
            <person name="Shin H."/>
            <person name="Sivam D."/>
            <person name="Squares R."/>
            <person name="Squares S."/>
            <person name="Tosato V."/>
            <person name="Vogt C."/>
            <person name="Volckaert G."/>
            <person name="Wambutt R."/>
            <person name="Warren T."/>
            <person name="Wedler H."/>
            <person name="Woodward J."/>
            <person name="Zhou S."/>
            <person name="Zimmermann W."/>
            <person name="Smith D.F."/>
            <person name="Blackwell J.M."/>
            <person name="Stuart K.D."/>
            <person name="Barrell B.G."/>
            <person name="Myler P.J."/>
        </authorList>
    </citation>
    <scope>NUCLEOTIDE SEQUENCE [LARGE SCALE GENOMIC DNA]</scope>
    <source>
        <strain>MHOM/IL/81/Friedlin</strain>
    </source>
</reference>
<reference key="2">
    <citation type="thesis" date="2006" institute="McGill University / Montreal" country="Canada">
        <title>Characterization of a novel Leishmania guanosine 5'-monophosphate reductase.</title>
        <authorList>
            <person name="Smith S.A."/>
        </authorList>
    </citation>
    <scope>FUNCTION</scope>
    <scope>CATALYTIC ACTIVITY</scope>
    <scope>BIOPHYSICOCHEMICAL PROPERTIES</scope>
    <scope>ACTIVITY REGULATION</scope>
</reference>
<sequence>MAALGSLPTLPEGLTYDDVLLIPQRSPVRSRKAVNTSTRLSRNIHLKIPIVASNMDTVCEDKTAVTMAREGGIGILHRFCSIEEQCAMVRKVKRAQSFLIEDPRMILPSATKAEALEELNWSGRKGGVSCLMVVDDLTSRRLCGVLTKSDLTFATGSALVETLMTPVSRMVVSTNTAITLEEAREVMRTKRTKNIPLLGPKGELLYLITRSDILKLTGNLNATLDSRGRLIVGAAIGVKKEDHERAAALVDAGADVLVVDIAHGHSDLCIDMVKALKVNPLTNKVDIIAGNIATAEAAQDLIDAGADGLKIGVGPGSICITRLVAGSGVPQLSSVMDCARVAKKHGVPCIADGGIKTAGDICKAIAAGADTVMLGNMLAGTDEAPGRVLVKDGKKVKIIRGMAGFGANISKAEREQRLDEDVFHDLVPEGVEGSVPCKGPLAPILKQLVGGLRSGISYCGSHSIADMQQRARFVRMSGAGLRESGSHDISKL</sequence>
<gene>
    <name evidence="1 3" type="primary">GMPR</name>
    <name type="ORF">LMJF_17_0725</name>
</gene>
<name>GMPR_LEIMA</name>
<protein>
    <recommendedName>
        <fullName evidence="1 3">GMP reductase</fullName>
        <shortName evidence="1 3">GMPR</shortName>
        <ecNumber evidence="1 2">1.7.1.7</ecNumber>
    </recommendedName>
    <alternativeName>
        <fullName evidence="1 3">Guanosine 5'-monophosphate oxidoreductase</fullName>
        <shortName evidence="1">Guanosine monophosphate reductase</shortName>
    </alternativeName>
</protein>
<organism>
    <name type="scientific">Leishmania major</name>
    <dbReference type="NCBI Taxonomy" id="5664"/>
    <lineage>
        <taxon>Eukaryota</taxon>
        <taxon>Discoba</taxon>
        <taxon>Euglenozoa</taxon>
        <taxon>Kinetoplastea</taxon>
        <taxon>Metakinetoplastina</taxon>
        <taxon>Trypanosomatida</taxon>
        <taxon>Trypanosomatidae</taxon>
        <taxon>Leishmaniinae</taxon>
        <taxon>Leishmania</taxon>
    </lineage>
</organism>